<reference key="1">
    <citation type="journal article" date="2000" name="Nucleic Acids Res.">
        <title>Complete genome sequence of the alkaliphilic bacterium Bacillus halodurans and genomic sequence comparison with Bacillus subtilis.</title>
        <authorList>
            <person name="Takami H."/>
            <person name="Nakasone K."/>
            <person name="Takaki Y."/>
            <person name="Maeno G."/>
            <person name="Sasaki R."/>
            <person name="Masui N."/>
            <person name="Fuji F."/>
            <person name="Hirama C."/>
            <person name="Nakamura Y."/>
            <person name="Ogasawara N."/>
            <person name="Kuhara S."/>
            <person name="Horikoshi K."/>
        </authorList>
    </citation>
    <scope>NUCLEOTIDE SEQUENCE [LARGE SCALE GENOMIC DNA]</scope>
    <source>
        <strain>ATCC BAA-125 / DSM 18197 / FERM 7344 / JCM 9153 / C-125</strain>
    </source>
</reference>
<organism>
    <name type="scientific">Halalkalibacterium halodurans (strain ATCC BAA-125 / DSM 18197 / FERM 7344 / JCM 9153 / C-125)</name>
    <name type="common">Bacillus halodurans</name>
    <dbReference type="NCBI Taxonomy" id="272558"/>
    <lineage>
        <taxon>Bacteria</taxon>
        <taxon>Bacillati</taxon>
        <taxon>Bacillota</taxon>
        <taxon>Bacilli</taxon>
        <taxon>Bacillales</taxon>
        <taxon>Bacillaceae</taxon>
        <taxon>Halalkalibacterium (ex Joshi et al. 2022)</taxon>
    </lineage>
</organism>
<protein>
    <recommendedName>
        <fullName evidence="1">Phosphomethylpyrimidine synthase</fullName>
        <ecNumber evidence="1">4.1.99.17</ecNumber>
    </recommendedName>
    <alternativeName>
        <fullName evidence="1">Hydroxymethylpyrimidine phosphate synthase</fullName>
        <shortName evidence="1">HMP-P synthase</shortName>
        <shortName evidence="1">HMP-phosphate synthase</shortName>
        <shortName evidence="1">HMPP synthase</shortName>
    </alternativeName>
    <alternativeName>
        <fullName evidence="1">Thiamine biosynthesis protein ThiC</fullName>
    </alternativeName>
</protein>
<dbReference type="EC" id="4.1.99.17" evidence="1"/>
<dbReference type="EMBL" id="BA000004">
    <property type="protein sequence ID" value="BAB05652.1"/>
    <property type="molecule type" value="Genomic_DNA"/>
</dbReference>
<dbReference type="PIR" id="E83891">
    <property type="entry name" value="E83891"/>
</dbReference>
<dbReference type="RefSeq" id="WP_010898092.1">
    <property type="nucleotide sequence ID" value="NC_002570.2"/>
</dbReference>
<dbReference type="SMR" id="Q9KBJ4"/>
<dbReference type="STRING" id="272558.gene:10727831"/>
<dbReference type="GeneID" id="87597529"/>
<dbReference type="KEGG" id="bha:BH1933"/>
<dbReference type="eggNOG" id="COG0422">
    <property type="taxonomic scope" value="Bacteria"/>
</dbReference>
<dbReference type="HOGENOM" id="CLU_013181_2_1_9"/>
<dbReference type="OrthoDB" id="9805897at2"/>
<dbReference type="UniPathway" id="UPA00060"/>
<dbReference type="Proteomes" id="UP000001258">
    <property type="component" value="Chromosome"/>
</dbReference>
<dbReference type="GO" id="GO:0005829">
    <property type="term" value="C:cytosol"/>
    <property type="evidence" value="ECO:0007669"/>
    <property type="project" value="TreeGrafter"/>
</dbReference>
<dbReference type="GO" id="GO:0051539">
    <property type="term" value="F:4 iron, 4 sulfur cluster binding"/>
    <property type="evidence" value="ECO:0007669"/>
    <property type="project" value="UniProtKB-KW"/>
</dbReference>
<dbReference type="GO" id="GO:0016830">
    <property type="term" value="F:carbon-carbon lyase activity"/>
    <property type="evidence" value="ECO:0007669"/>
    <property type="project" value="InterPro"/>
</dbReference>
<dbReference type="GO" id="GO:0008270">
    <property type="term" value="F:zinc ion binding"/>
    <property type="evidence" value="ECO:0007669"/>
    <property type="project" value="UniProtKB-UniRule"/>
</dbReference>
<dbReference type="GO" id="GO:0009228">
    <property type="term" value="P:thiamine biosynthetic process"/>
    <property type="evidence" value="ECO:0007669"/>
    <property type="project" value="UniProtKB-KW"/>
</dbReference>
<dbReference type="GO" id="GO:0009229">
    <property type="term" value="P:thiamine diphosphate biosynthetic process"/>
    <property type="evidence" value="ECO:0007669"/>
    <property type="project" value="UniProtKB-UniRule"/>
</dbReference>
<dbReference type="FunFam" id="3.20.20.540:FF:000001">
    <property type="entry name" value="Phosphomethylpyrimidine synthase"/>
    <property type="match status" value="1"/>
</dbReference>
<dbReference type="Gene3D" id="6.10.250.620">
    <property type="match status" value="1"/>
</dbReference>
<dbReference type="Gene3D" id="3.20.20.540">
    <property type="entry name" value="Radical SAM ThiC family, central domain"/>
    <property type="match status" value="1"/>
</dbReference>
<dbReference type="HAMAP" id="MF_00089">
    <property type="entry name" value="ThiC"/>
    <property type="match status" value="1"/>
</dbReference>
<dbReference type="InterPro" id="IPR037509">
    <property type="entry name" value="ThiC"/>
</dbReference>
<dbReference type="InterPro" id="IPR025747">
    <property type="entry name" value="ThiC-associated_dom"/>
</dbReference>
<dbReference type="InterPro" id="IPR038521">
    <property type="entry name" value="ThiC/Bza_core_dom"/>
</dbReference>
<dbReference type="InterPro" id="IPR002817">
    <property type="entry name" value="ThiC/BzaA/B"/>
</dbReference>
<dbReference type="NCBIfam" id="NF006763">
    <property type="entry name" value="PRK09284.1"/>
    <property type="match status" value="1"/>
</dbReference>
<dbReference type="NCBIfam" id="NF009895">
    <property type="entry name" value="PRK13352.1"/>
    <property type="match status" value="1"/>
</dbReference>
<dbReference type="NCBIfam" id="TIGR00190">
    <property type="entry name" value="thiC"/>
    <property type="match status" value="1"/>
</dbReference>
<dbReference type="PANTHER" id="PTHR30557:SF1">
    <property type="entry name" value="PHOSPHOMETHYLPYRIMIDINE SYNTHASE, CHLOROPLASTIC"/>
    <property type="match status" value="1"/>
</dbReference>
<dbReference type="PANTHER" id="PTHR30557">
    <property type="entry name" value="THIAMINE BIOSYNTHESIS PROTEIN THIC"/>
    <property type="match status" value="1"/>
</dbReference>
<dbReference type="Pfam" id="PF13667">
    <property type="entry name" value="ThiC-associated"/>
    <property type="match status" value="1"/>
</dbReference>
<dbReference type="Pfam" id="PF01964">
    <property type="entry name" value="ThiC_Rad_SAM"/>
    <property type="match status" value="1"/>
</dbReference>
<dbReference type="SFLD" id="SFLDF00407">
    <property type="entry name" value="phosphomethylpyrimidine_syntha"/>
    <property type="match status" value="1"/>
</dbReference>
<dbReference type="SFLD" id="SFLDG01114">
    <property type="entry name" value="phosphomethylpyrimidine_syntha"/>
    <property type="match status" value="1"/>
</dbReference>
<dbReference type="SFLD" id="SFLDS00113">
    <property type="entry name" value="Radical_SAM_Phosphomethylpyrim"/>
    <property type="match status" value="1"/>
</dbReference>
<accession>Q9KBJ4</accession>
<evidence type="ECO:0000255" key="1">
    <source>
        <dbReference type="HAMAP-Rule" id="MF_00089"/>
    </source>
</evidence>
<evidence type="ECO:0000256" key="2">
    <source>
        <dbReference type="SAM" id="MobiDB-lite"/>
    </source>
</evidence>
<keyword id="KW-0004">4Fe-4S</keyword>
<keyword id="KW-0408">Iron</keyword>
<keyword id="KW-0411">Iron-sulfur</keyword>
<keyword id="KW-0456">Lyase</keyword>
<keyword id="KW-0479">Metal-binding</keyword>
<keyword id="KW-1185">Reference proteome</keyword>
<keyword id="KW-0949">S-adenosyl-L-methionine</keyword>
<keyword id="KW-0784">Thiamine biosynthesis</keyword>
<keyword id="KW-0862">Zinc</keyword>
<feature type="chain" id="PRO_0000152784" description="Phosphomethylpyrimidine synthase">
    <location>
        <begin position="1"/>
        <end position="595"/>
    </location>
</feature>
<feature type="region of interest" description="Disordered" evidence="2">
    <location>
        <begin position="97"/>
        <end position="134"/>
    </location>
</feature>
<feature type="compositionally biased region" description="Basic and acidic residues" evidence="2">
    <location>
        <begin position="97"/>
        <end position="120"/>
    </location>
</feature>
<feature type="compositionally biased region" description="Basic residues" evidence="2">
    <location>
        <begin position="124"/>
        <end position="133"/>
    </location>
</feature>
<feature type="binding site" evidence="1">
    <location>
        <position position="202"/>
    </location>
    <ligand>
        <name>substrate</name>
    </ligand>
</feature>
<feature type="binding site" evidence="1">
    <location>
        <position position="231"/>
    </location>
    <ligand>
        <name>substrate</name>
    </ligand>
</feature>
<feature type="binding site" evidence="1">
    <location>
        <position position="260"/>
    </location>
    <ligand>
        <name>substrate</name>
    </ligand>
</feature>
<feature type="binding site" evidence="1">
    <location>
        <position position="296"/>
    </location>
    <ligand>
        <name>substrate</name>
    </ligand>
</feature>
<feature type="binding site" evidence="1">
    <location>
        <begin position="316"/>
        <end position="318"/>
    </location>
    <ligand>
        <name>substrate</name>
    </ligand>
</feature>
<feature type="binding site" evidence="1">
    <location>
        <begin position="357"/>
        <end position="360"/>
    </location>
    <ligand>
        <name>substrate</name>
    </ligand>
</feature>
<feature type="binding site" evidence="1">
    <location>
        <position position="396"/>
    </location>
    <ligand>
        <name>substrate</name>
    </ligand>
</feature>
<feature type="binding site" evidence="1">
    <location>
        <position position="400"/>
    </location>
    <ligand>
        <name>Zn(2+)</name>
        <dbReference type="ChEBI" id="CHEBI:29105"/>
    </ligand>
</feature>
<feature type="binding site" evidence="1">
    <location>
        <position position="423"/>
    </location>
    <ligand>
        <name>substrate</name>
    </ligand>
</feature>
<feature type="binding site" evidence="1">
    <location>
        <position position="464"/>
    </location>
    <ligand>
        <name>Zn(2+)</name>
        <dbReference type="ChEBI" id="CHEBI:29105"/>
    </ligand>
</feature>
<feature type="binding site" evidence="1">
    <location>
        <position position="544"/>
    </location>
    <ligand>
        <name>[4Fe-4S] cluster</name>
        <dbReference type="ChEBI" id="CHEBI:49883"/>
        <note>4Fe-4S-S-AdoMet</note>
    </ligand>
</feature>
<feature type="binding site" evidence="1">
    <location>
        <position position="547"/>
    </location>
    <ligand>
        <name>[4Fe-4S] cluster</name>
        <dbReference type="ChEBI" id="CHEBI:49883"/>
        <note>4Fe-4S-S-AdoMet</note>
    </ligand>
</feature>
<feature type="binding site" evidence="1">
    <location>
        <position position="552"/>
    </location>
    <ligand>
        <name>[4Fe-4S] cluster</name>
        <dbReference type="ChEBI" id="CHEBI:49883"/>
        <note>4Fe-4S-S-AdoMet</note>
    </ligand>
</feature>
<comment type="function">
    <text evidence="1">Catalyzes the synthesis of the hydroxymethylpyrimidine phosphate (HMP-P) moiety of thiamine from aminoimidazole ribotide (AIR) in a radical S-adenosyl-L-methionine (SAM)-dependent reaction.</text>
</comment>
<comment type="catalytic activity">
    <reaction evidence="1">
        <text>5-amino-1-(5-phospho-beta-D-ribosyl)imidazole + S-adenosyl-L-methionine = 4-amino-2-methyl-5-(phosphooxymethyl)pyrimidine + CO + 5'-deoxyadenosine + formate + L-methionine + 3 H(+)</text>
        <dbReference type="Rhea" id="RHEA:24840"/>
        <dbReference type="ChEBI" id="CHEBI:15378"/>
        <dbReference type="ChEBI" id="CHEBI:15740"/>
        <dbReference type="ChEBI" id="CHEBI:17245"/>
        <dbReference type="ChEBI" id="CHEBI:17319"/>
        <dbReference type="ChEBI" id="CHEBI:57844"/>
        <dbReference type="ChEBI" id="CHEBI:58354"/>
        <dbReference type="ChEBI" id="CHEBI:59789"/>
        <dbReference type="ChEBI" id="CHEBI:137981"/>
        <dbReference type="EC" id="4.1.99.17"/>
    </reaction>
</comment>
<comment type="cofactor">
    <cofactor evidence="1">
        <name>[4Fe-4S] cluster</name>
        <dbReference type="ChEBI" id="CHEBI:49883"/>
    </cofactor>
    <text evidence="1">Binds 1 [4Fe-4S] cluster per subunit. The cluster is coordinated with 3 cysteines and an exchangeable S-adenosyl-L-methionine.</text>
</comment>
<comment type="pathway">
    <text evidence="1">Cofactor biosynthesis; thiamine diphosphate biosynthesis.</text>
</comment>
<comment type="similarity">
    <text evidence="1">Belongs to the ThiC family.</text>
</comment>
<proteinExistence type="inferred from homology"/>
<sequence length="595" mass="66849">MSKSTIDLKQLSIQSSFPNSQKRYVTGSRSDIRVPFREISQHPTVTDSGEAENEPILVYDSSGPYTDESYEVNIEKGLPAIRKSWILERGDCEKYEGRDVRPEDNGFTKDDDPRAAREVFPRTSSHKPLRAKKGANVTQMHYAKKGIVTPEMEFVAIRENVSPEFVRDELARGRAILPSNINHPESEPMIIGRNFHVKINANIGNSAVSSSIAEEVEKMTWATRWGADTIMDLSTGKNIHTTREWIIRNSPVPVGTVPIYQALEKVNGVAEDLTWEVYRDTLIEQAEQGVDYFTIHAGVLLRYIPLTAKRVTGIVSRGGSIMAQWCLYHHKENFLYTHFEEICEIMKTYDIAFSLGDGLRPGSIADANDEAQFAELETLGELTKIAWEHDVQVMVEGPGHVPMHQIKENMDKQLDICQEAPFYTLGPLTTDIAPGYDHITSAIGAAMIGWYGTAMLCYVTPKEHLGLPNKDDVREGVITYKIAAHAADLAKGHPGAQKRDDALSKARFEFRWRDQFNLSLDPERAMEFHDETLPAEGAKTAHFCSMCGPKFCSMRISQDIRTYAKEQGLDTEEAIEKGLEEKADEFKQAGGNLYR</sequence>
<gene>
    <name evidence="1" type="primary">thiC</name>
    <name type="ordered locus">BH1933</name>
</gene>
<name>THIC_HALH5</name>